<sequence>MKWTILTALLIISAESKNLYKRDSEPHIRFLGEVYKKVDTIDFRGLVLITLAQHLQKCPFEELAKQVEQITTLAQACAAGARHADCATPLITLFLNRICAVPELSATYDWSTECCAKSDPERHQCFRAHRNPAPGTHYKRPEPEELCESYKKNKEDVLAHYIYEVSRGHPVLYSPAVLGFAYQFNGICSHCCEEEDKTTCFKDRMTQLKKALHIVEVQQKESCRILDNFGVRVLQALKLVKISKKNPKATFEVAQKLTSEVTHLNEDCCHGDMLECMIERMELTEHTCEHHEDISTKLKTCCEKPLIERTHCIVNLENDDIPEDLPKKVTKFVEDPEVCKLFADKKDIFLAEFLYEYGRRHPELSDQLLLRIAKGYEHQLEKCCELENFLECLKDGEHVLADAIKESTELTEKDCAIQQKLGDYLFQNVLLIRYTKKMPHVTTPSLIHITKHMTEVGDKCCALPNTQKMPCAEGGLSLIIGEFCEMEKTHPINEHVKNCCWKSYSNRRNCFTNLGPDDSYVAPEITDDTFHFTEDLCTLPEEELKNKKQGFIATLVKVKPHVTDELYGQIAVEFTKMREKCCAAEDHQACFNAEEPILIEHCKQLAA</sequence>
<reference evidence="8 10" key="1">
    <citation type="journal article" date="2005" name="Protein Sci.">
        <title>Frog albumin is expressed in skin and characterized as a novel potent trypsin inhibitor.</title>
        <authorList>
            <person name="Zhang Y.X."/>
            <person name="Lai R."/>
            <person name="Lee W.H."/>
            <person name="Zhang Y."/>
        </authorList>
    </citation>
    <scope>NUCLEOTIDE SEQUENCE [MRNA]</scope>
    <scope>PARTIAL PROTEIN SEQUENCE</scope>
    <scope>FUNCTION</scope>
    <scope>SUBCELLULAR LOCATION</scope>
    <scope>TISSUE SPECIFICITY</scope>
    <source>
        <tissue evidence="6">Liver</tissue>
        <tissue evidence="10">Serum</tissue>
        <tissue evidence="9">Skin</tissue>
    </source>
</reference>
<evidence type="ECO:0000250" key="1">
    <source>
        <dbReference type="UniProtKB" id="P02768"/>
    </source>
</evidence>
<evidence type="ECO:0000250" key="2">
    <source>
        <dbReference type="UniProtKB" id="P02769"/>
    </source>
</evidence>
<evidence type="ECO:0000250" key="3">
    <source>
        <dbReference type="UniProtKB" id="P02770"/>
    </source>
</evidence>
<evidence type="ECO:0000255" key="4"/>
<evidence type="ECO:0000255" key="5">
    <source>
        <dbReference type="PROSITE-ProRule" id="PRU00769"/>
    </source>
</evidence>
<evidence type="ECO:0000269" key="6">
    <source>
    </source>
</evidence>
<evidence type="ECO:0000303" key="7">
    <source>
    </source>
</evidence>
<evidence type="ECO:0000305" key="8"/>
<evidence type="ECO:0000312" key="9">
    <source>
        <dbReference type="EMBL" id="AAX82485.1"/>
    </source>
</evidence>
<evidence type="ECO:0000312" key="10">
    <source>
        <dbReference type="EMBL" id="AAX82486.1"/>
    </source>
</evidence>
<keyword id="KW-0106">Calcium</keyword>
<keyword id="KW-0165">Cleavage on pair of basic residues</keyword>
<keyword id="KW-0186">Copper</keyword>
<keyword id="KW-0903">Direct protein sequencing</keyword>
<keyword id="KW-1015">Disulfide bond</keyword>
<keyword id="KW-0446">Lipid-binding</keyword>
<keyword id="KW-0479">Metal-binding</keyword>
<keyword id="KW-0646">Protease inhibitor</keyword>
<keyword id="KW-0677">Repeat</keyword>
<keyword id="KW-0964">Secreted</keyword>
<keyword id="KW-0722">Serine protease inhibitor</keyword>
<keyword id="KW-0732">Signal</keyword>
<keyword id="KW-0862">Zinc</keyword>
<feature type="signal peptide" evidence="4">
    <location>
        <begin position="1"/>
        <end position="16"/>
    </location>
</feature>
<feature type="propeptide" id="PRO_0000423001" evidence="4 6">
    <location>
        <begin position="17"/>
        <end position="20"/>
    </location>
</feature>
<feature type="chain" id="PRO_0000423002" description="Serum albumin" evidence="6">
    <location>
        <begin position="23"/>
        <end position="607"/>
    </location>
</feature>
<feature type="domain" description="Albumin 1" evidence="5">
    <location>
        <begin position="19"/>
        <end position="209"/>
    </location>
</feature>
<feature type="domain" description="Albumin 2" evidence="5">
    <location>
        <begin position="210"/>
        <end position="401"/>
    </location>
</feature>
<feature type="domain" description="Albumin 3" evidence="5">
    <location>
        <begin position="403"/>
        <end position="600"/>
    </location>
</feature>
<feature type="binding site" evidence="3">
    <location>
        <position position="27"/>
    </location>
    <ligand>
        <name>Cu cation</name>
        <dbReference type="ChEBI" id="CHEBI:23378"/>
    </ligand>
</feature>
<feature type="binding site" evidence="1">
    <location>
        <position position="270"/>
    </location>
    <ligand>
        <name>Zn(2+)</name>
        <dbReference type="ChEBI" id="CHEBI:29105"/>
    </ligand>
</feature>
<feature type="binding site" evidence="2">
    <location>
        <position position="272"/>
    </location>
    <ligand>
        <name>Ca(2+)</name>
        <dbReference type="ChEBI" id="CHEBI:29108"/>
        <label>1</label>
    </ligand>
</feature>
<feature type="binding site" evidence="1">
    <location>
        <position position="272"/>
    </location>
    <ligand>
        <name>Zn(2+)</name>
        <dbReference type="ChEBI" id="CHEBI:29105"/>
    </ligand>
</feature>
<feature type="binding site" evidence="2">
    <location>
        <position position="275"/>
    </location>
    <ligand>
        <name>Ca(2+)</name>
        <dbReference type="ChEBI" id="CHEBI:29108"/>
        <label>1</label>
    </ligand>
</feature>
<feature type="disulfide bond" evidence="1 5">
    <location>
        <begin position="77"/>
        <end position="86"/>
    </location>
</feature>
<feature type="disulfide bond" evidence="1 5">
    <location>
        <begin position="99"/>
        <end position="115"/>
    </location>
</feature>
<feature type="disulfide bond" evidence="1 5">
    <location>
        <begin position="114"/>
        <end position="125"/>
    </location>
</feature>
<feature type="disulfide bond" evidence="1 5">
    <location>
        <begin position="147"/>
        <end position="192"/>
    </location>
</feature>
<feature type="disulfide bond" evidence="1 5">
    <location>
        <begin position="191"/>
        <end position="200"/>
    </location>
</feature>
<feature type="disulfide bond" evidence="1 5">
    <location>
        <begin position="223"/>
        <end position="269"/>
    </location>
</feature>
<feature type="disulfide bond" evidence="1 5">
    <location>
        <begin position="268"/>
        <end position="276"/>
    </location>
</feature>
<feature type="disulfide bond" evidence="1 5">
    <location>
        <begin position="288"/>
        <end position="302"/>
    </location>
</feature>
<feature type="disulfide bond" evidence="1 5">
    <location>
        <begin position="301"/>
        <end position="312"/>
    </location>
</feature>
<feature type="disulfide bond" evidence="1 5">
    <location>
        <begin position="339"/>
        <end position="384"/>
    </location>
</feature>
<feature type="disulfide bond" evidence="1 5">
    <location>
        <begin position="383"/>
        <end position="392"/>
    </location>
</feature>
<feature type="disulfide bond" evidence="1 5">
    <location>
        <begin position="415"/>
        <end position="461"/>
    </location>
</feature>
<feature type="disulfide bond" evidence="1 5">
    <location>
        <begin position="460"/>
        <end position="471"/>
    </location>
</feature>
<feature type="disulfide bond" evidence="1 5">
    <location>
        <begin position="484"/>
        <end position="500"/>
    </location>
</feature>
<feature type="disulfide bond" evidence="1 5">
    <location>
        <begin position="499"/>
        <end position="510"/>
    </location>
</feature>
<feature type="disulfide bond" evidence="1 5">
    <location>
        <begin position="537"/>
        <end position="582"/>
    </location>
</feature>
<feature type="disulfide bond" evidence="1 5">
    <location>
        <begin position="581"/>
        <end position="590"/>
    </location>
</feature>
<feature type="sequence conflict" description="In Ref. 1; AAX82485." evidence="8" ref="1">
    <original>E</original>
    <variation>G</variation>
    <location>
        <position position="494"/>
    </location>
</feature>
<feature type="sequence conflict" description="In Ref. 1; AAX82485." evidence="8" ref="1">
    <original>N</original>
    <variation>S</variation>
    <location>
        <position position="592"/>
    </location>
</feature>
<dbReference type="EMBL" id="AY885649">
    <property type="protein sequence ID" value="AAX82485.1"/>
    <property type="molecule type" value="mRNA"/>
</dbReference>
<dbReference type="EMBL" id="AY885650">
    <property type="protein sequence ID" value="AAX82486.1"/>
    <property type="molecule type" value="mRNA"/>
</dbReference>
<dbReference type="SMR" id="Q3T478"/>
<dbReference type="GO" id="GO:0072562">
    <property type="term" value="C:blood microparticle"/>
    <property type="evidence" value="ECO:0007669"/>
    <property type="project" value="TreeGrafter"/>
</dbReference>
<dbReference type="GO" id="GO:0005737">
    <property type="term" value="C:cytoplasm"/>
    <property type="evidence" value="ECO:0007669"/>
    <property type="project" value="TreeGrafter"/>
</dbReference>
<dbReference type="GO" id="GO:0008289">
    <property type="term" value="F:lipid binding"/>
    <property type="evidence" value="ECO:0007669"/>
    <property type="project" value="UniProtKB-KW"/>
</dbReference>
<dbReference type="GO" id="GO:0046872">
    <property type="term" value="F:metal ion binding"/>
    <property type="evidence" value="ECO:0007669"/>
    <property type="project" value="UniProtKB-KW"/>
</dbReference>
<dbReference type="GO" id="GO:0004867">
    <property type="term" value="F:serine-type endopeptidase inhibitor activity"/>
    <property type="evidence" value="ECO:0007669"/>
    <property type="project" value="UniProtKB-KW"/>
</dbReference>
<dbReference type="CDD" id="cd00015">
    <property type="entry name" value="ALBUMIN"/>
    <property type="match status" value="3"/>
</dbReference>
<dbReference type="FunFam" id="1.10.246.10:FF:000002">
    <property type="entry name" value="Serum albumin"/>
    <property type="match status" value="2"/>
</dbReference>
<dbReference type="Gene3D" id="1.10.246.10">
    <property type="match status" value="6"/>
</dbReference>
<dbReference type="InterPro" id="IPR000264">
    <property type="entry name" value="ALB/AFP/VDB"/>
</dbReference>
<dbReference type="InterPro" id="IPR020858">
    <property type="entry name" value="Serum_albumin-like"/>
</dbReference>
<dbReference type="InterPro" id="IPR021177">
    <property type="entry name" value="Serum_albumin/AFP/Afamin"/>
</dbReference>
<dbReference type="InterPro" id="IPR020857">
    <property type="entry name" value="Serum_albumin_CS"/>
</dbReference>
<dbReference type="InterPro" id="IPR014760">
    <property type="entry name" value="Serum_albumin_N"/>
</dbReference>
<dbReference type="PANTHER" id="PTHR11385:SF14">
    <property type="entry name" value="AFAMIN"/>
    <property type="match status" value="1"/>
</dbReference>
<dbReference type="PANTHER" id="PTHR11385">
    <property type="entry name" value="SERUM ALBUMIN-RELATED"/>
    <property type="match status" value="1"/>
</dbReference>
<dbReference type="Pfam" id="PF00273">
    <property type="entry name" value="Serum_albumin"/>
    <property type="match status" value="3"/>
</dbReference>
<dbReference type="PIRSF" id="PIRSF002520">
    <property type="entry name" value="Serum_albumin_subgroup"/>
    <property type="match status" value="1"/>
</dbReference>
<dbReference type="PRINTS" id="PR00803">
    <property type="entry name" value="AFETOPROTEIN"/>
</dbReference>
<dbReference type="PRINTS" id="PR00802">
    <property type="entry name" value="SERUMALBUMIN"/>
</dbReference>
<dbReference type="SMART" id="SM00103">
    <property type="entry name" value="ALBUMIN"/>
    <property type="match status" value="3"/>
</dbReference>
<dbReference type="SUPFAM" id="SSF48552">
    <property type="entry name" value="Serum albumin-like"/>
    <property type="match status" value="3"/>
</dbReference>
<dbReference type="PROSITE" id="PS00212">
    <property type="entry name" value="ALBUMIN_1"/>
    <property type="match status" value="3"/>
</dbReference>
<dbReference type="PROSITE" id="PS51438">
    <property type="entry name" value="ALBUMIN_2"/>
    <property type="match status" value="3"/>
</dbReference>
<name>ALBU_BOMMX</name>
<protein>
    <recommendedName>
        <fullName evidence="1">Serum albumin</fullName>
    </recommendedName>
    <alternativeName>
        <fullName evidence="7">BmA-serum</fullName>
    </alternativeName>
    <alternativeName>
        <fullName evidence="7">BmA-skin</fullName>
    </alternativeName>
</protein>
<comment type="function">
    <text evidence="1 6">Serum albumin, the main protein of plasma, has a good binding capacity for water, Ca(2+), Na(+), K(+), fatty acids, hormones, bilirubin and drugs. Its main function is the regulation of the colloidal osmotic pressure of blood (By similarity). Potent inhibitor of trypsin but has no inhibitory effect on thrombin, chymotrypsin, elastase and subtilisin.</text>
</comment>
<comment type="subcellular location">
    <subcellularLocation>
        <location evidence="5 6">Secreted</location>
    </subcellularLocation>
</comment>
<comment type="tissue specificity">
    <text evidence="6 8">Plasma. In the skin, widely distributed around the membranes of epithelial layer cells and within the stratum spongiosum of the dermis (at protein level).</text>
</comment>
<comment type="similarity">
    <text evidence="5">Belongs to the ALB/AFP/VDB family.</text>
</comment>
<organism>
    <name type="scientific">Bombina maxima</name>
    <name type="common">Giant fire-bellied toad</name>
    <name type="synonym">Chinese red belly toad</name>
    <dbReference type="NCBI Taxonomy" id="161274"/>
    <lineage>
        <taxon>Eukaryota</taxon>
        <taxon>Metazoa</taxon>
        <taxon>Chordata</taxon>
        <taxon>Craniata</taxon>
        <taxon>Vertebrata</taxon>
        <taxon>Euteleostomi</taxon>
        <taxon>Amphibia</taxon>
        <taxon>Batrachia</taxon>
        <taxon>Anura</taxon>
        <taxon>Bombinatoridae</taxon>
        <taxon>Bombina</taxon>
    </lineage>
</organism>
<accession>Q3T478</accession>
<accession>Q3T479</accession>
<proteinExistence type="evidence at protein level"/>